<reference key="1">
    <citation type="journal article" date="2009" name="PLoS Genet.">
        <title>Organised genome dynamics in the Escherichia coli species results in highly diverse adaptive paths.</title>
        <authorList>
            <person name="Touchon M."/>
            <person name="Hoede C."/>
            <person name="Tenaillon O."/>
            <person name="Barbe V."/>
            <person name="Baeriswyl S."/>
            <person name="Bidet P."/>
            <person name="Bingen E."/>
            <person name="Bonacorsi S."/>
            <person name="Bouchier C."/>
            <person name="Bouvet O."/>
            <person name="Calteau A."/>
            <person name="Chiapello H."/>
            <person name="Clermont O."/>
            <person name="Cruveiller S."/>
            <person name="Danchin A."/>
            <person name="Diard M."/>
            <person name="Dossat C."/>
            <person name="Karoui M.E."/>
            <person name="Frapy E."/>
            <person name="Garry L."/>
            <person name="Ghigo J.M."/>
            <person name="Gilles A.M."/>
            <person name="Johnson J."/>
            <person name="Le Bouguenec C."/>
            <person name="Lescat M."/>
            <person name="Mangenot S."/>
            <person name="Martinez-Jehanne V."/>
            <person name="Matic I."/>
            <person name="Nassif X."/>
            <person name="Oztas S."/>
            <person name="Petit M.A."/>
            <person name="Pichon C."/>
            <person name="Rouy Z."/>
            <person name="Ruf C.S."/>
            <person name="Schneider D."/>
            <person name="Tourret J."/>
            <person name="Vacherie B."/>
            <person name="Vallenet D."/>
            <person name="Medigue C."/>
            <person name="Rocha E.P.C."/>
            <person name="Denamur E."/>
        </authorList>
    </citation>
    <scope>NUCLEOTIDE SEQUENCE [LARGE SCALE GENOMIC DNA]</scope>
    <source>
        <strain>IAI39 / ExPEC</strain>
    </source>
</reference>
<name>YCFP_ECO7I</name>
<proteinExistence type="inferred from homology"/>
<gene>
    <name evidence="1" type="primary">ycfP</name>
    <name type="ordered locus">ECIAI39_2052</name>
</gene>
<comment type="similarity">
    <text evidence="1">Belongs to the UPF0227 family.</text>
</comment>
<dbReference type="EMBL" id="CU928164">
    <property type="protein sequence ID" value="CAR18179.1"/>
    <property type="molecule type" value="Genomic_DNA"/>
</dbReference>
<dbReference type="RefSeq" id="WP_000587936.1">
    <property type="nucleotide sequence ID" value="NC_011750.1"/>
</dbReference>
<dbReference type="RefSeq" id="YP_002408019.1">
    <property type="nucleotide sequence ID" value="NC_011750.1"/>
</dbReference>
<dbReference type="SMR" id="B7NKH1"/>
<dbReference type="STRING" id="585057.ECIAI39_2052"/>
<dbReference type="ESTHER" id="ecoli-ycfp">
    <property type="family name" value="abh_upf00227"/>
</dbReference>
<dbReference type="KEGG" id="ect:ECIAI39_2052"/>
<dbReference type="PATRIC" id="fig|585057.6.peg.2132"/>
<dbReference type="HOGENOM" id="CLU_128769_0_0_6"/>
<dbReference type="Proteomes" id="UP000000749">
    <property type="component" value="Chromosome"/>
</dbReference>
<dbReference type="FunFam" id="3.40.50.1820:FF:000007">
    <property type="entry name" value="UPF0227 protein YcfP"/>
    <property type="match status" value="1"/>
</dbReference>
<dbReference type="Gene3D" id="3.40.50.1820">
    <property type="entry name" value="alpha/beta hydrolase"/>
    <property type="match status" value="1"/>
</dbReference>
<dbReference type="HAMAP" id="MF_01047">
    <property type="entry name" value="UPF0227"/>
    <property type="match status" value="1"/>
</dbReference>
<dbReference type="InterPro" id="IPR029058">
    <property type="entry name" value="AB_hydrolase_fold"/>
</dbReference>
<dbReference type="InterPro" id="IPR022987">
    <property type="entry name" value="UPF0227"/>
</dbReference>
<dbReference type="InterPro" id="IPR008886">
    <property type="entry name" value="UPF0227/Esterase_YqiA"/>
</dbReference>
<dbReference type="NCBIfam" id="NF003431">
    <property type="entry name" value="PRK04940.1"/>
    <property type="match status" value="1"/>
</dbReference>
<dbReference type="PANTHER" id="PTHR35602">
    <property type="entry name" value="ESTERASE YQIA-RELATED"/>
    <property type="match status" value="1"/>
</dbReference>
<dbReference type="PANTHER" id="PTHR35602:SF2">
    <property type="entry name" value="UPF0227 PROTEIN YCFP"/>
    <property type="match status" value="1"/>
</dbReference>
<dbReference type="Pfam" id="PF05728">
    <property type="entry name" value="UPF0227"/>
    <property type="match status" value="1"/>
</dbReference>
<dbReference type="SUPFAM" id="SSF53474">
    <property type="entry name" value="alpha/beta-Hydrolases"/>
    <property type="match status" value="1"/>
</dbReference>
<protein>
    <recommendedName>
        <fullName evidence="1">UPF0227 protein YcfP</fullName>
    </recommendedName>
</protein>
<evidence type="ECO:0000255" key="1">
    <source>
        <dbReference type="HAMAP-Rule" id="MF_01047"/>
    </source>
</evidence>
<feature type="chain" id="PRO_1000136186" description="UPF0227 protein YcfP">
    <location>
        <begin position="1"/>
        <end position="180"/>
    </location>
</feature>
<organism>
    <name type="scientific">Escherichia coli O7:K1 (strain IAI39 / ExPEC)</name>
    <dbReference type="NCBI Taxonomy" id="585057"/>
    <lineage>
        <taxon>Bacteria</taxon>
        <taxon>Pseudomonadati</taxon>
        <taxon>Pseudomonadota</taxon>
        <taxon>Gammaproteobacteria</taxon>
        <taxon>Enterobacterales</taxon>
        <taxon>Enterobacteriaceae</taxon>
        <taxon>Escherichia</taxon>
    </lineage>
</organism>
<sequence length="180" mass="21242">MIIYLHGFDSNSPGNHEKVLQLQFIDPDVRLISYSTRHPKHDMQHLLKEVDKMLQLNVDERPLICGVGLGGYWAERIGFLCDIRQVIFNPNLFPYENMEGKIDRPEEYADIATKCVTNFREKNRDRCLVILSRNDESLNSQRTSEELHHYYEIVWDEEQTHKFKNISPHLQRIKAFKTLG</sequence>
<accession>B7NKH1</accession>